<protein>
    <recommendedName>
        <fullName evidence="1">Large ribosomal subunit protein bL32</fullName>
    </recommendedName>
    <alternativeName>
        <fullName evidence="3">50S ribosomal protein L32</fullName>
    </alternativeName>
</protein>
<name>RL32_ALCBS</name>
<feature type="chain" id="PRO_0000296416" description="Large ribosomal subunit protein bL32">
    <location>
        <begin position="1"/>
        <end position="62"/>
    </location>
</feature>
<feature type="region of interest" description="Disordered" evidence="2">
    <location>
        <begin position="1"/>
        <end position="62"/>
    </location>
</feature>
<feature type="compositionally biased region" description="Basic residues" evidence="2">
    <location>
        <begin position="1"/>
        <end position="16"/>
    </location>
</feature>
<feature type="compositionally biased region" description="Polar residues" evidence="2">
    <location>
        <begin position="53"/>
        <end position="62"/>
    </location>
</feature>
<keyword id="KW-1185">Reference proteome</keyword>
<keyword id="KW-0687">Ribonucleoprotein</keyword>
<keyword id="KW-0689">Ribosomal protein</keyword>
<sequence>MAVQKNRKTRSKRGMRRSHDALPAAALTEDSNTGEVHRRHHISPDGMYRGRQVISQGDSDDE</sequence>
<dbReference type="EMBL" id="AM286690">
    <property type="protein sequence ID" value="CAL16514.1"/>
    <property type="molecule type" value="Genomic_DNA"/>
</dbReference>
<dbReference type="RefSeq" id="WP_011588350.1">
    <property type="nucleotide sequence ID" value="NC_008260.1"/>
</dbReference>
<dbReference type="SMR" id="Q0VQN4"/>
<dbReference type="STRING" id="393595.ABO_1066"/>
<dbReference type="KEGG" id="abo:ABO_1066"/>
<dbReference type="eggNOG" id="COG0333">
    <property type="taxonomic scope" value="Bacteria"/>
</dbReference>
<dbReference type="HOGENOM" id="CLU_129084_2_1_6"/>
<dbReference type="OrthoDB" id="9801927at2"/>
<dbReference type="Proteomes" id="UP000008871">
    <property type="component" value="Chromosome"/>
</dbReference>
<dbReference type="GO" id="GO:0015934">
    <property type="term" value="C:large ribosomal subunit"/>
    <property type="evidence" value="ECO:0007669"/>
    <property type="project" value="InterPro"/>
</dbReference>
<dbReference type="GO" id="GO:0003735">
    <property type="term" value="F:structural constituent of ribosome"/>
    <property type="evidence" value="ECO:0007669"/>
    <property type="project" value="InterPro"/>
</dbReference>
<dbReference type="GO" id="GO:0006412">
    <property type="term" value="P:translation"/>
    <property type="evidence" value="ECO:0007669"/>
    <property type="project" value="UniProtKB-UniRule"/>
</dbReference>
<dbReference type="HAMAP" id="MF_00340">
    <property type="entry name" value="Ribosomal_bL32"/>
    <property type="match status" value="1"/>
</dbReference>
<dbReference type="InterPro" id="IPR002677">
    <property type="entry name" value="Ribosomal_bL32"/>
</dbReference>
<dbReference type="InterPro" id="IPR044957">
    <property type="entry name" value="Ribosomal_bL32_bact"/>
</dbReference>
<dbReference type="InterPro" id="IPR011332">
    <property type="entry name" value="Ribosomal_zn-bd"/>
</dbReference>
<dbReference type="NCBIfam" id="TIGR01031">
    <property type="entry name" value="rpmF_bact"/>
    <property type="match status" value="1"/>
</dbReference>
<dbReference type="PANTHER" id="PTHR35534">
    <property type="entry name" value="50S RIBOSOMAL PROTEIN L32"/>
    <property type="match status" value="1"/>
</dbReference>
<dbReference type="PANTHER" id="PTHR35534:SF1">
    <property type="entry name" value="LARGE RIBOSOMAL SUBUNIT PROTEIN BL32"/>
    <property type="match status" value="1"/>
</dbReference>
<dbReference type="Pfam" id="PF01783">
    <property type="entry name" value="Ribosomal_L32p"/>
    <property type="match status" value="1"/>
</dbReference>
<dbReference type="SUPFAM" id="SSF57829">
    <property type="entry name" value="Zn-binding ribosomal proteins"/>
    <property type="match status" value="1"/>
</dbReference>
<gene>
    <name evidence="1" type="primary">rpmF</name>
    <name type="ordered locus">ABO_1066</name>
</gene>
<reference key="1">
    <citation type="journal article" date="2006" name="Nat. Biotechnol.">
        <title>Genome sequence of the ubiquitous hydrocarbon-degrading marine bacterium Alcanivorax borkumensis.</title>
        <authorList>
            <person name="Schneiker S."/>
            <person name="Martins dos Santos V.A.P."/>
            <person name="Bartels D."/>
            <person name="Bekel T."/>
            <person name="Brecht M."/>
            <person name="Buhrmester J."/>
            <person name="Chernikova T.N."/>
            <person name="Denaro R."/>
            <person name="Ferrer M."/>
            <person name="Gertler C."/>
            <person name="Goesmann A."/>
            <person name="Golyshina O.V."/>
            <person name="Kaminski F."/>
            <person name="Khachane A.N."/>
            <person name="Lang S."/>
            <person name="Linke B."/>
            <person name="McHardy A.C."/>
            <person name="Meyer F."/>
            <person name="Nechitaylo T."/>
            <person name="Puehler A."/>
            <person name="Regenhardt D."/>
            <person name="Rupp O."/>
            <person name="Sabirova J.S."/>
            <person name="Selbitschka W."/>
            <person name="Yakimov M.M."/>
            <person name="Timmis K.N."/>
            <person name="Vorhoelter F.-J."/>
            <person name="Weidner S."/>
            <person name="Kaiser O."/>
            <person name="Golyshin P.N."/>
        </authorList>
    </citation>
    <scope>NUCLEOTIDE SEQUENCE [LARGE SCALE GENOMIC DNA]</scope>
    <source>
        <strain>ATCC 700651 / DSM 11573 / NCIMB 13689 / SK2</strain>
    </source>
</reference>
<accession>Q0VQN4</accession>
<organism>
    <name type="scientific">Alcanivorax borkumensis (strain ATCC 700651 / DSM 11573 / NCIMB 13689 / SK2)</name>
    <dbReference type="NCBI Taxonomy" id="393595"/>
    <lineage>
        <taxon>Bacteria</taxon>
        <taxon>Pseudomonadati</taxon>
        <taxon>Pseudomonadota</taxon>
        <taxon>Gammaproteobacteria</taxon>
        <taxon>Oceanospirillales</taxon>
        <taxon>Alcanivoracaceae</taxon>
        <taxon>Alcanivorax</taxon>
    </lineage>
</organism>
<evidence type="ECO:0000255" key="1">
    <source>
        <dbReference type="HAMAP-Rule" id="MF_00340"/>
    </source>
</evidence>
<evidence type="ECO:0000256" key="2">
    <source>
        <dbReference type="SAM" id="MobiDB-lite"/>
    </source>
</evidence>
<evidence type="ECO:0000305" key="3"/>
<comment type="similarity">
    <text evidence="1">Belongs to the bacterial ribosomal protein bL32 family.</text>
</comment>
<proteinExistence type="inferred from homology"/>